<keyword id="KW-1185">Reference proteome</keyword>
<feature type="chain" id="PRO_0000170484" description="Alkaline shock protein 23">
    <location>
        <begin position="1"/>
        <end position="166"/>
    </location>
</feature>
<feature type="region of interest" description="Disordered" evidence="2">
    <location>
        <begin position="1"/>
        <end position="40"/>
    </location>
</feature>
<feature type="region of interest" description="Disordered" evidence="2">
    <location>
        <begin position="144"/>
        <end position="166"/>
    </location>
</feature>
<feature type="compositionally biased region" description="Low complexity" evidence="2">
    <location>
        <begin position="27"/>
        <end position="38"/>
    </location>
</feature>
<reference key="1">
    <citation type="journal article" date="2005" name="J. Bacteriol.">
        <title>Insights on evolution of virulence and resistance from the complete genome analysis of an early methicillin-resistant Staphylococcus aureus strain and a biofilm-producing methicillin-resistant Staphylococcus epidermidis strain.</title>
        <authorList>
            <person name="Gill S.R."/>
            <person name="Fouts D.E."/>
            <person name="Archer G.L."/>
            <person name="Mongodin E.F."/>
            <person name="DeBoy R.T."/>
            <person name="Ravel J."/>
            <person name="Paulsen I.T."/>
            <person name="Kolonay J.F."/>
            <person name="Brinkac L.M."/>
            <person name="Beanan M.J."/>
            <person name="Dodson R.J."/>
            <person name="Daugherty S.C."/>
            <person name="Madupu R."/>
            <person name="Angiuoli S.V."/>
            <person name="Durkin A.S."/>
            <person name="Haft D.H."/>
            <person name="Vamathevan J.J."/>
            <person name="Khouri H."/>
            <person name="Utterback T.R."/>
            <person name="Lee C."/>
            <person name="Dimitrov G."/>
            <person name="Jiang L."/>
            <person name="Qin H."/>
            <person name="Weidman J."/>
            <person name="Tran K."/>
            <person name="Kang K.H."/>
            <person name="Hance I.R."/>
            <person name="Nelson K.E."/>
            <person name="Fraser C.M."/>
        </authorList>
    </citation>
    <scope>NUCLEOTIDE SEQUENCE [LARGE SCALE GENOMIC DNA]</scope>
    <source>
        <strain>ATCC 35984 / DSM 28319 / BCRC 17069 / CCUG 31568 / BM 3577 / RP62A</strain>
    </source>
</reference>
<protein>
    <recommendedName>
        <fullName>Alkaline shock protein 23</fullName>
    </recommendedName>
</protein>
<name>ASP23_STAEQ</name>
<proteinExistence type="inferred from homology"/>
<organism>
    <name type="scientific">Staphylococcus epidermidis (strain ATCC 35984 / DSM 28319 / BCRC 17069 / CCUG 31568 / BM 3577 / RP62A)</name>
    <dbReference type="NCBI Taxonomy" id="176279"/>
    <lineage>
        <taxon>Bacteria</taxon>
        <taxon>Bacillati</taxon>
        <taxon>Bacillota</taxon>
        <taxon>Bacilli</taxon>
        <taxon>Bacillales</taxon>
        <taxon>Staphylococcaceae</taxon>
        <taxon>Staphylococcus</taxon>
    </lineage>
</organism>
<gene>
    <name type="primary">asp23</name>
    <name type="ordered locus">SERP1782</name>
</gene>
<comment type="function">
    <text evidence="1">May play a key role in alkaline pH tolerance.</text>
</comment>
<comment type="similarity">
    <text evidence="3">Belongs to the asp23 family.</text>
</comment>
<sequence>MAVDNNKAKQAYDNQTGVNEQERKEQQQAQNNQPQFENKLTFSDEVVEKIAGIAAREVKGILDMKGGFTDSFTNAFSNGNNVTTGVSVEVGEKQAAVDLKVILEYGESAPKIFRKVTDLVKEQVKYITGLEVVEVNMQVDDVMTKKEWQQKNEKDNKENNEREGLK</sequence>
<evidence type="ECO:0000250" key="1"/>
<evidence type="ECO:0000256" key="2">
    <source>
        <dbReference type="SAM" id="MobiDB-lite"/>
    </source>
</evidence>
<evidence type="ECO:0000305" key="3"/>
<accession>Q5HM47</accession>
<dbReference type="EMBL" id="CP000029">
    <property type="protein sequence ID" value="AAW55150.1"/>
    <property type="molecule type" value="Genomic_DNA"/>
</dbReference>
<dbReference type="RefSeq" id="WP_001829780.1">
    <property type="nucleotide sequence ID" value="NC_002976.3"/>
</dbReference>
<dbReference type="SMR" id="Q5HM47"/>
<dbReference type="STRING" id="176279.SERP1782"/>
<dbReference type="KEGG" id="ser:SERP1782"/>
<dbReference type="eggNOG" id="COG1302">
    <property type="taxonomic scope" value="Bacteria"/>
</dbReference>
<dbReference type="HOGENOM" id="CLU_113198_1_1_9"/>
<dbReference type="Proteomes" id="UP000000531">
    <property type="component" value="Chromosome"/>
</dbReference>
<dbReference type="InterPro" id="IPR005531">
    <property type="entry name" value="Asp23"/>
</dbReference>
<dbReference type="PANTHER" id="PTHR34297:SF3">
    <property type="entry name" value="ALKALINE SHOCK PROTEIN 23"/>
    <property type="match status" value="1"/>
</dbReference>
<dbReference type="PANTHER" id="PTHR34297">
    <property type="entry name" value="HYPOTHETICAL CYTOSOLIC PROTEIN-RELATED"/>
    <property type="match status" value="1"/>
</dbReference>
<dbReference type="Pfam" id="PF03780">
    <property type="entry name" value="Asp23"/>
    <property type="match status" value="1"/>
</dbReference>